<feature type="chain" id="PRO_0000093384" description="ATP-binding cassette sub-family G member 1">
    <location>
        <begin position="1"/>
        <end position="678"/>
    </location>
</feature>
<feature type="topological domain" description="Cytoplasmic" evidence="1">
    <location>
        <begin position="1"/>
        <end position="426"/>
    </location>
</feature>
<feature type="transmembrane region" description="Helical" evidence="1">
    <location>
        <begin position="427"/>
        <end position="445"/>
    </location>
</feature>
<feature type="topological domain" description="Extracellular" evidence="1">
    <location>
        <begin position="446"/>
        <end position="456"/>
    </location>
</feature>
<feature type="transmembrane region" description="Helical" evidence="1">
    <location>
        <begin position="457"/>
        <end position="477"/>
    </location>
</feature>
<feature type="topological domain" description="Cytoplasmic" evidence="1">
    <location>
        <begin position="478"/>
        <end position="506"/>
    </location>
</feature>
<feature type="transmembrane region" description="Helical" evidence="1">
    <location>
        <begin position="507"/>
        <end position="525"/>
    </location>
</feature>
<feature type="topological domain" description="Extracellular" evidence="1">
    <location>
        <begin position="526"/>
        <end position="533"/>
    </location>
</feature>
<feature type="transmembrane region" description="Helical" evidence="1">
    <location>
        <begin position="534"/>
        <end position="555"/>
    </location>
</feature>
<feature type="topological domain" description="Cytoplasmic" evidence="1">
    <location>
        <begin position="556"/>
        <end position="567"/>
    </location>
</feature>
<feature type="transmembrane region" description="Helical" evidence="1">
    <location>
        <begin position="568"/>
        <end position="586"/>
    </location>
</feature>
<feature type="topological domain" description="Extracellular" evidence="1">
    <location>
        <begin position="587"/>
        <end position="649"/>
    </location>
</feature>
<feature type="transmembrane region" description="Helical" evidence="1">
    <location>
        <begin position="650"/>
        <end position="669"/>
    </location>
</feature>
<feature type="topological domain" description="Cytoplasmic" evidence="1">
    <location>
        <begin position="670"/>
        <end position="678"/>
    </location>
</feature>
<feature type="domain" description="ABC transporter" evidence="2">
    <location>
        <begin position="77"/>
        <end position="317"/>
    </location>
</feature>
<feature type="domain" description="ABC transmembrane type-2">
    <location>
        <begin position="415"/>
        <end position="673"/>
    </location>
</feature>
<feature type="binding site" evidence="2">
    <location>
        <begin position="118"/>
        <end position="125"/>
    </location>
    <ligand>
        <name>ATP</name>
        <dbReference type="ChEBI" id="CHEBI:30616"/>
    </ligand>
</feature>
<feature type="lipid moiety-binding region" description="S-palmitoyl cysteine" evidence="12">
    <location>
        <position position="30"/>
    </location>
</feature>
<feature type="lipid moiety-binding region" description="S-palmitoyl cysteine" evidence="12">
    <location>
        <position position="154"/>
    </location>
</feature>
<feature type="lipid moiety-binding region" description="S-palmitoyl cysteine" evidence="12">
    <location>
        <position position="315"/>
    </location>
</feature>
<feature type="lipid moiety-binding region" description="S-palmitoyl cysteine" evidence="12">
    <location>
        <position position="394"/>
    </location>
</feature>
<feature type="lipid moiety-binding region" description="S-palmitoyl cysteine" evidence="12">
    <location>
        <position position="406"/>
    </location>
</feature>
<feature type="splice variant" id="VSP_010718" description="In isoform 8." evidence="16">
    <original>MACLMAAFSVGTAMNASSYSAEMTEPKSVCVSVDEVVSSNMEATETDLLNGHLKKVDNNLTEAQRFSSLPRRAAVNIEFRDLSYSVPEGPWWRKK</original>
    <variation>MVRRGWSVCTAILLARLWCLVPTHTFLSEYPEAAEYPHPGWVYWLQMAVAPGHLRAWVMRNNVTTNIPSAFSGTLTHEEKAVLTVFTGTATAVHVQVAALASAKLESSVFVTDCVSCKIENVCDSALQGKRVPMSGLQGSSIVIMPPSNRPLASAASCTWSVQVQGGPHHLGVVAISGKVLSAAHGAGRAYGWGFPGDPMEE</variation>
    <location>
        <begin position="1"/>
        <end position="95"/>
    </location>
</feature>
<feature type="splice variant" id="VSP_000050" description="In isoform 7." evidence="15">
    <location>
        <begin position="1"/>
        <end position="22"/>
    </location>
</feature>
<feature type="splice variant" id="VSP_000047" description="In isoform 2." evidence="15">
    <original>MACLMAAFSVGTAM</original>
    <variation>MRISLPRAPERDGGVSASSLLDTVT</variation>
    <location>
        <begin position="1"/>
        <end position="14"/>
    </location>
</feature>
<feature type="splice variant" id="VSP_000048" description="In isoform 3." evidence="15">
    <original>MACLMAAFSVGTAM</original>
    <variation>MLGTQGWTKQRKPCPQ</variation>
    <location>
        <begin position="1"/>
        <end position="14"/>
    </location>
</feature>
<feature type="splice variant" id="VSP_000049" description="In isoform 5." evidence="15">
    <original>MACLMAAFSVGTAM</original>
    <variation>MIMRLPQPHGT</variation>
    <location>
        <begin position="1"/>
        <end position="14"/>
    </location>
</feature>
<feature type="splice variant" id="VSP_000046" description="In isoform 6." evidence="15">
    <location>
        <begin position="1"/>
        <end position="4"/>
    </location>
</feature>
<feature type="splice variant" id="VSP_000051" description="In isoform 2, isoform 3, isoform 4, isoform 5, isoform 6 and isoform 7." evidence="15 17 18">
    <location>
        <begin position="375"/>
        <end position="386"/>
    </location>
</feature>
<feature type="sequence variant" id="VAR_012279" evidence="7">
    <original>F</original>
    <variation>L</variation>
    <location>
        <position position="668"/>
    </location>
</feature>
<feature type="mutagenesis site" description="No significant effect." evidence="12">
    <original>C</original>
    <variation>A</variation>
    <location>
        <position position="30"/>
    </location>
</feature>
<feature type="mutagenesis site" description="Affects ATP binding. Does not affect efflux of 7beta-hydroxycholesterol. Does not affect localization at plasma membrane. Does not affect homodimerization. Decreases cholesterol and phospholipids efflux. Does not affect heretodimerization with ABCG4." evidence="9 10 14">
    <original>K</original>
    <variation>M</variation>
    <location>
        <position position="124"/>
    </location>
</feature>
<feature type="mutagenesis site" description="No significant effect." evidence="12">
    <original>C</original>
    <variation>A</variation>
    <location>
        <position position="154"/>
    </location>
</feature>
<feature type="mutagenesis site" description="Significantly decreases ABCG1-mediated cholesterol efflux." evidence="12">
    <original>C</original>
    <variation>A</variation>
    <variation>S</variation>
    <location>
        <position position="315"/>
    </location>
</feature>
<feature type="mutagenesis site" description="No significant effect." evidence="12">
    <original>C</original>
    <variation>A</variation>
    <location>
        <position position="394"/>
    </location>
</feature>
<feature type="mutagenesis site" description="No significant effect." evidence="12">
    <original>C</original>
    <variation>A</variation>
    <location>
        <position position="406"/>
    </location>
</feature>
<feature type="mutagenesis site" description="Significantly reduces interaction with CAV1; when associated with A-493. Significantly reduces ABCG1-mediated cholesterol efflux; when associated with A-493." evidence="13">
    <original>Y</original>
    <variation>A</variation>
    <location>
        <position position="491"/>
    </location>
</feature>
<feature type="mutagenesis site" description="Significantly reduces interaction with CAV1; when associated with A-491. Significantly reduces ABCG1-mediated cholesterol efflux; when associated with A-491." evidence="13">
    <original>Y</original>
    <variation>A</variation>
    <location>
        <position position="493"/>
    </location>
</feature>
<feature type="mutagenesis site" description="Significantly reduces interaction with CAV1; when associated with A-499. Significantly reduces ABCG1-mediated cholesterol efflux; when associated with A-499. Affects subcellular location at plasma membrane; when associated with A-499. Affects ABCG1 traffincking to the plasma membrane; when associated with A-499." evidence="13">
    <original>Y</original>
    <variation>A</variation>
    <location>
        <position position="498"/>
    </location>
</feature>
<feature type="mutagenesis site" description="Does not affect ABCG1-mediated cholesterol efflux; when associated with I-499." evidence="13">
    <original>Y</original>
    <variation>F</variation>
    <location>
        <position position="498"/>
    </location>
</feature>
<feature type="mutagenesis site" description="Dramatically reduces the ability of ABCG1 to mediate cholesterol efflux; when associated with I-499." evidence="13">
    <original>Y</original>
    <variation>I</variation>
    <location>
        <position position="498"/>
    </location>
</feature>
<feature type="mutagenesis site" description="Does not affect ABCG1-mediated cholesterol efflux; when associated with I-499." evidence="13">
    <original>Y</original>
    <variation>W</variation>
    <location>
        <position position="498"/>
    </location>
</feature>
<feature type="mutagenesis site" description="Significantly reduces interaction with CAV1; when associated with A-498. Significantly reduces ABCG1-mediated cholesterol efflux; when associated with A-498. Affects subcellular location at plasma membrane; when associated with A-498. Affects ABCG1 traffincking to the plasma membrane; when associated with A-498." evidence="13">
    <original>Y</original>
    <variation>A</variation>
    <location>
        <position position="499"/>
    </location>
</feature>
<feature type="mutagenesis site" description="Does not affect ABCG1-mediated cholesterol efflux; when associated with I-498." evidence="13">
    <original>Y</original>
    <variation>F</variation>
    <location>
        <position position="499"/>
    </location>
</feature>
<feature type="mutagenesis site" description="Dramatically reduces the ability of ABCG1 to mediate cholesterol efflux; when associated with I-498." evidence="13">
    <original>Y</original>
    <variation>I</variation>
    <location>
        <position position="499"/>
    </location>
</feature>
<feature type="mutagenesis site" description="Does not affect ABCG1-mediated cholesterol efflux; when associated with I-498." evidence="13">
    <original>Y</original>
    <variation>W</variation>
    <location>
        <position position="499"/>
    </location>
</feature>
<feature type="sequence conflict" description="In Ref. 4; AAK28839/AAK28841." evidence="19" ref="4">
    <original>S</original>
    <variation>T</variation>
    <location>
        <position position="38"/>
    </location>
</feature>
<feature type="sequence conflict" description="In Ref. 1; CAA62631, 4; AAK28838/AAK28839/AAK28840/AAK28841/AAK28842 and 5; AAL06598." evidence="19" ref="1 4 5">
    <original>A</original>
    <variation>T</variation>
    <location>
        <position position="448"/>
    </location>
</feature>
<feature type="sequence conflict" description="In Ref. 8; AAC51098." evidence="19" ref="8">
    <original>R</original>
    <variation>A</variation>
    <location>
        <position position="533"/>
    </location>
</feature>
<feature type="strand" evidence="22">
    <location>
        <begin position="77"/>
        <end position="84"/>
    </location>
</feature>
<feature type="strand" evidence="22">
    <location>
        <begin position="101"/>
        <end position="108"/>
    </location>
</feature>
<feature type="strand" evidence="21">
    <location>
        <begin position="110"/>
        <end position="112"/>
    </location>
</feature>
<feature type="strand" evidence="22">
    <location>
        <begin position="114"/>
        <end position="117"/>
    </location>
</feature>
<feature type="helix" evidence="22">
    <location>
        <begin position="124"/>
        <end position="130"/>
    </location>
</feature>
<feature type="turn" evidence="22">
    <location>
        <begin position="131"/>
        <end position="134"/>
    </location>
</feature>
<feature type="strand" evidence="22">
    <location>
        <begin position="140"/>
        <end position="145"/>
    </location>
</feature>
<feature type="strand" evidence="22">
    <location>
        <begin position="152"/>
        <end position="154"/>
    </location>
</feature>
<feature type="helix" evidence="22">
    <location>
        <begin position="155"/>
        <end position="157"/>
    </location>
</feature>
<feature type="strand" evidence="22">
    <location>
        <begin position="158"/>
        <end position="162"/>
    </location>
</feature>
<feature type="strand" evidence="21">
    <location>
        <begin position="170"/>
        <end position="173"/>
    </location>
</feature>
<feature type="helix" evidence="22">
    <location>
        <begin position="174"/>
        <end position="185"/>
    </location>
</feature>
<feature type="helix" evidence="22">
    <location>
        <begin position="190"/>
        <end position="203"/>
    </location>
</feature>
<feature type="strand" evidence="22">
    <location>
        <begin position="210"/>
        <end position="213"/>
    </location>
</feature>
<feature type="helix" evidence="22">
    <location>
        <begin position="214"/>
        <end position="216"/>
    </location>
</feature>
<feature type="helix" evidence="22">
    <location>
        <begin position="219"/>
        <end position="230"/>
    </location>
</feature>
<feature type="strand" evidence="22">
    <location>
        <begin position="236"/>
        <end position="242"/>
    </location>
</feature>
<feature type="strand" evidence="21">
    <location>
        <begin position="243"/>
        <end position="247"/>
    </location>
</feature>
<feature type="helix" evidence="22">
    <location>
        <begin position="249"/>
        <end position="264"/>
    </location>
</feature>
<feature type="strand" evidence="22">
    <location>
        <begin position="268"/>
        <end position="272"/>
    </location>
</feature>
<feature type="helix" evidence="22">
    <location>
        <begin position="278"/>
        <end position="281"/>
    </location>
</feature>
<feature type="strand" evidence="22">
    <location>
        <begin position="285"/>
        <end position="291"/>
    </location>
</feature>
<feature type="strand" evidence="22">
    <location>
        <begin position="294"/>
        <end position="300"/>
    </location>
</feature>
<feature type="helix" evidence="22">
    <location>
        <begin position="301"/>
        <end position="303"/>
    </location>
</feature>
<feature type="helix" evidence="22">
    <location>
        <begin position="304"/>
        <end position="309"/>
    </location>
</feature>
<feature type="turn" evidence="22">
    <location>
        <begin position="310"/>
        <end position="312"/>
    </location>
</feature>
<feature type="helix" evidence="22">
    <location>
        <begin position="321"/>
        <end position="329"/>
    </location>
</feature>
<feature type="turn" evidence="22">
    <location>
        <begin position="330"/>
        <end position="333"/>
    </location>
</feature>
<feature type="helix" evidence="22">
    <location>
        <begin position="337"/>
        <end position="345"/>
    </location>
</feature>
<feature type="helix" evidence="22">
    <location>
        <begin position="401"/>
        <end position="416"/>
    </location>
</feature>
<feature type="turn" evidence="22">
    <location>
        <begin position="421"/>
        <end position="424"/>
    </location>
</feature>
<feature type="helix" evidence="22">
    <location>
        <begin position="425"/>
        <end position="440"/>
    </location>
</feature>
<feature type="strand" evidence="22">
    <location>
        <begin position="441"/>
        <end position="443"/>
    </location>
</feature>
<feature type="helix" evidence="22">
    <location>
        <begin position="451"/>
        <end position="489"/>
    </location>
</feature>
<feature type="helix" evidence="22">
    <location>
        <begin position="495"/>
        <end position="521"/>
    </location>
</feature>
<feature type="turn" evidence="22">
    <location>
        <begin position="522"/>
        <end position="526"/>
    </location>
</feature>
<feature type="helix" evidence="22">
    <location>
        <begin position="533"/>
        <end position="557"/>
    </location>
</feature>
<feature type="strand" evidence="21">
    <location>
        <begin position="558"/>
        <end position="561"/>
    </location>
</feature>
<feature type="helix" evidence="22">
    <location>
        <begin position="562"/>
        <end position="578"/>
    </location>
</feature>
<feature type="strand" evidence="22">
    <location>
        <begin position="579"/>
        <end position="584"/>
    </location>
</feature>
<feature type="turn" evidence="22">
    <location>
        <begin position="586"/>
        <end position="588"/>
    </location>
</feature>
<feature type="helix" evidence="22">
    <location>
        <begin position="591"/>
        <end position="598"/>
    </location>
</feature>
<feature type="helix" evidence="22">
    <location>
        <begin position="601"/>
        <end position="613"/>
    </location>
</feature>
<feature type="turn" evidence="22">
    <location>
        <begin position="633"/>
        <end position="635"/>
    </location>
</feature>
<feature type="helix" evidence="22">
    <location>
        <begin position="636"/>
        <end position="640"/>
    </location>
</feature>
<feature type="helix" evidence="22">
    <location>
        <begin position="648"/>
        <end position="677"/>
    </location>
</feature>
<protein>
    <recommendedName>
        <fullName evidence="19">ATP-binding cassette sub-family G member 1</fullName>
        <ecNumber evidence="9">7.6.2.-</ecNumber>
    </recommendedName>
    <alternativeName>
        <fullName>ATP-binding cassette transporter 8</fullName>
    </alternativeName>
    <alternativeName>
        <fullName>White protein homolog</fullName>
    </alternativeName>
</protein>
<dbReference type="EC" id="7.6.2.-" evidence="9"/>
<dbReference type="EMBL" id="X91249">
    <property type="protein sequence ID" value="CAA62631.1"/>
    <property type="status" value="ALT_INIT"/>
    <property type="molecule type" value="mRNA"/>
</dbReference>
<dbReference type="EMBL" id="AB038161">
    <property type="protein sequence ID" value="BAB13728.2"/>
    <property type="status" value="ALT_INIT"/>
    <property type="molecule type" value="Genomic_DNA"/>
</dbReference>
<dbReference type="EMBL" id="AJ289137">
    <property type="protein sequence ID" value="CAC00730.1"/>
    <property type="status" value="ALT_INIT"/>
    <property type="molecule type" value="Genomic_DNA"/>
</dbReference>
<dbReference type="EMBL" id="AJ289138">
    <property type="protein sequence ID" value="CAC00730.1"/>
    <property type="status" value="JOINED"/>
    <property type="molecule type" value="Genomic_DNA"/>
</dbReference>
<dbReference type="EMBL" id="AJ289139">
    <property type="protein sequence ID" value="CAC00730.1"/>
    <property type="status" value="JOINED"/>
    <property type="molecule type" value="Genomic_DNA"/>
</dbReference>
<dbReference type="EMBL" id="AJ289140">
    <property type="protein sequence ID" value="CAC00730.1"/>
    <property type="status" value="JOINED"/>
    <property type="molecule type" value="Genomic_DNA"/>
</dbReference>
<dbReference type="EMBL" id="AJ289141">
    <property type="protein sequence ID" value="CAC00730.1"/>
    <property type="status" value="JOINED"/>
    <property type="molecule type" value="Genomic_DNA"/>
</dbReference>
<dbReference type="EMBL" id="AJ289142">
    <property type="protein sequence ID" value="CAC00730.1"/>
    <property type="status" value="JOINED"/>
    <property type="molecule type" value="Genomic_DNA"/>
</dbReference>
<dbReference type="EMBL" id="AJ289143">
    <property type="protein sequence ID" value="CAC00730.1"/>
    <property type="status" value="JOINED"/>
    <property type="molecule type" value="Genomic_DNA"/>
</dbReference>
<dbReference type="EMBL" id="AJ289144">
    <property type="protein sequence ID" value="CAC00730.1"/>
    <property type="status" value="JOINED"/>
    <property type="molecule type" value="Genomic_DNA"/>
</dbReference>
<dbReference type="EMBL" id="AJ289145">
    <property type="protein sequence ID" value="CAC00730.1"/>
    <property type="status" value="JOINED"/>
    <property type="molecule type" value="Genomic_DNA"/>
</dbReference>
<dbReference type="EMBL" id="AJ289146">
    <property type="protein sequence ID" value="CAC00730.1"/>
    <property type="status" value="JOINED"/>
    <property type="molecule type" value="Genomic_DNA"/>
</dbReference>
<dbReference type="EMBL" id="AJ289147">
    <property type="protein sequence ID" value="CAC00730.1"/>
    <property type="status" value="JOINED"/>
    <property type="molecule type" value="Genomic_DNA"/>
</dbReference>
<dbReference type="EMBL" id="AJ289148">
    <property type="protein sequence ID" value="CAC00730.1"/>
    <property type="status" value="JOINED"/>
    <property type="molecule type" value="Genomic_DNA"/>
</dbReference>
<dbReference type="EMBL" id="AJ289149">
    <property type="protein sequence ID" value="CAC00730.1"/>
    <property type="status" value="JOINED"/>
    <property type="molecule type" value="Genomic_DNA"/>
</dbReference>
<dbReference type="EMBL" id="AJ289150">
    <property type="protein sequence ID" value="CAC00730.1"/>
    <property type="status" value="JOINED"/>
    <property type="molecule type" value="Genomic_DNA"/>
</dbReference>
<dbReference type="EMBL" id="AJ289151">
    <property type="protein sequence ID" value="CAC00730.1"/>
    <property type="status" value="JOINED"/>
    <property type="molecule type" value="Genomic_DNA"/>
</dbReference>
<dbReference type="EMBL" id="AF323658">
    <property type="protein sequence ID" value="AAK28836.1"/>
    <property type="molecule type" value="Genomic_DNA"/>
</dbReference>
<dbReference type="EMBL" id="AF323644">
    <property type="protein sequence ID" value="AAK28836.1"/>
    <property type="status" value="JOINED"/>
    <property type="molecule type" value="Genomic_DNA"/>
</dbReference>
<dbReference type="EMBL" id="AF323645">
    <property type="protein sequence ID" value="AAK28836.1"/>
    <property type="status" value="JOINED"/>
    <property type="molecule type" value="Genomic_DNA"/>
</dbReference>
<dbReference type="EMBL" id="AF323646">
    <property type="protein sequence ID" value="AAK28836.1"/>
    <property type="status" value="JOINED"/>
    <property type="molecule type" value="Genomic_DNA"/>
</dbReference>
<dbReference type="EMBL" id="AF323647">
    <property type="protein sequence ID" value="AAK28836.1"/>
    <property type="status" value="JOINED"/>
    <property type="molecule type" value="Genomic_DNA"/>
</dbReference>
<dbReference type="EMBL" id="AF323648">
    <property type="protein sequence ID" value="AAK28836.1"/>
    <property type="status" value="JOINED"/>
    <property type="molecule type" value="Genomic_DNA"/>
</dbReference>
<dbReference type="EMBL" id="AF323649">
    <property type="protein sequence ID" value="AAK28836.1"/>
    <property type="status" value="JOINED"/>
    <property type="molecule type" value="Genomic_DNA"/>
</dbReference>
<dbReference type="EMBL" id="AF323650">
    <property type="protein sequence ID" value="AAK28836.1"/>
    <property type="status" value="JOINED"/>
    <property type="molecule type" value="Genomic_DNA"/>
</dbReference>
<dbReference type="EMBL" id="AF323651">
    <property type="protein sequence ID" value="AAK28836.1"/>
    <property type="status" value="JOINED"/>
    <property type="molecule type" value="Genomic_DNA"/>
</dbReference>
<dbReference type="EMBL" id="AF323652">
    <property type="protein sequence ID" value="AAK28836.1"/>
    <property type="status" value="JOINED"/>
    <property type="molecule type" value="Genomic_DNA"/>
</dbReference>
<dbReference type="EMBL" id="AF323653">
    <property type="protein sequence ID" value="AAK28836.1"/>
    <property type="status" value="JOINED"/>
    <property type="molecule type" value="Genomic_DNA"/>
</dbReference>
<dbReference type="EMBL" id="AF323654">
    <property type="protein sequence ID" value="AAK28836.1"/>
    <property type="status" value="JOINED"/>
    <property type="molecule type" value="Genomic_DNA"/>
</dbReference>
<dbReference type="EMBL" id="AF323655">
    <property type="protein sequence ID" value="AAK28836.1"/>
    <property type="status" value="JOINED"/>
    <property type="molecule type" value="Genomic_DNA"/>
</dbReference>
<dbReference type="EMBL" id="AF323656">
    <property type="protein sequence ID" value="AAK28836.1"/>
    <property type="status" value="JOINED"/>
    <property type="molecule type" value="Genomic_DNA"/>
</dbReference>
<dbReference type="EMBL" id="AF323657">
    <property type="protein sequence ID" value="AAK28836.1"/>
    <property type="status" value="JOINED"/>
    <property type="molecule type" value="Genomic_DNA"/>
</dbReference>
<dbReference type="EMBL" id="AF323664">
    <property type="protein sequence ID" value="AAK28842.1"/>
    <property type="molecule type" value="mRNA"/>
</dbReference>
<dbReference type="EMBL" id="AF323658">
    <property type="protein sequence ID" value="AAK28833.1"/>
    <property type="molecule type" value="Genomic_DNA"/>
</dbReference>
<dbReference type="EMBL" id="AF323640">
    <property type="protein sequence ID" value="AAK28833.1"/>
    <property type="status" value="JOINED"/>
    <property type="molecule type" value="Genomic_DNA"/>
</dbReference>
<dbReference type="EMBL" id="AF323645">
    <property type="protein sequence ID" value="AAK28833.1"/>
    <property type="status" value="JOINED"/>
    <property type="molecule type" value="Genomic_DNA"/>
</dbReference>
<dbReference type="EMBL" id="AF323646">
    <property type="protein sequence ID" value="AAK28833.1"/>
    <property type="status" value="JOINED"/>
    <property type="molecule type" value="Genomic_DNA"/>
</dbReference>
<dbReference type="EMBL" id="AF323647">
    <property type="protein sequence ID" value="AAK28833.1"/>
    <property type="status" value="JOINED"/>
    <property type="molecule type" value="Genomic_DNA"/>
</dbReference>
<dbReference type="EMBL" id="AF323648">
    <property type="protein sequence ID" value="AAK28833.1"/>
    <property type="status" value="JOINED"/>
    <property type="molecule type" value="Genomic_DNA"/>
</dbReference>
<dbReference type="EMBL" id="AF323649">
    <property type="protein sequence ID" value="AAK28833.1"/>
    <property type="status" value="JOINED"/>
    <property type="molecule type" value="Genomic_DNA"/>
</dbReference>
<dbReference type="EMBL" id="AF323650">
    <property type="protein sequence ID" value="AAK28833.1"/>
    <property type="status" value="JOINED"/>
    <property type="molecule type" value="Genomic_DNA"/>
</dbReference>
<dbReference type="EMBL" id="AF323651">
    <property type="protein sequence ID" value="AAK28833.1"/>
    <property type="status" value="JOINED"/>
    <property type="molecule type" value="Genomic_DNA"/>
</dbReference>
<dbReference type="EMBL" id="AF323652">
    <property type="protein sequence ID" value="AAK28833.1"/>
    <property type="status" value="JOINED"/>
    <property type="molecule type" value="Genomic_DNA"/>
</dbReference>
<dbReference type="EMBL" id="AF323653">
    <property type="protein sequence ID" value="AAK28833.1"/>
    <property type="status" value="JOINED"/>
    <property type="molecule type" value="Genomic_DNA"/>
</dbReference>
<dbReference type="EMBL" id="AF323654">
    <property type="protein sequence ID" value="AAK28833.1"/>
    <property type="status" value="JOINED"/>
    <property type="molecule type" value="Genomic_DNA"/>
</dbReference>
<dbReference type="EMBL" id="AF323655">
    <property type="protein sequence ID" value="AAK28833.1"/>
    <property type="status" value="JOINED"/>
    <property type="molecule type" value="Genomic_DNA"/>
</dbReference>
<dbReference type="EMBL" id="AF323656">
    <property type="protein sequence ID" value="AAK28833.1"/>
    <property type="status" value="JOINED"/>
    <property type="molecule type" value="Genomic_DNA"/>
</dbReference>
<dbReference type="EMBL" id="AF323657">
    <property type="protein sequence ID" value="AAK28833.1"/>
    <property type="status" value="JOINED"/>
    <property type="molecule type" value="Genomic_DNA"/>
</dbReference>
<dbReference type="EMBL" id="AF323660">
    <property type="protein sequence ID" value="AAK28838.1"/>
    <property type="molecule type" value="mRNA"/>
</dbReference>
<dbReference type="EMBL" id="AF323663">
    <property type="protein sequence ID" value="AAK28841.1"/>
    <property type="status" value="ALT_INIT"/>
    <property type="molecule type" value="mRNA"/>
</dbReference>
<dbReference type="EMBL" id="AF323658">
    <property type="protein sequence ID" value="AAK28835.1"/>
    <property type="molecule type" value="Genomic_DNA"/>
</dbReference>
<dbReference type="EMBL" id="AF323642">
    <property type="protein sequence ID" value="AAK28835.1"/>
    <property type="status" value="JOINED"/>
    <property type="molecule type" value="Genomic_DNA"/>
</dbReference>
<dbReference type="EMBL" id="AF323645">
    <property type="protein sequence ID" value="AAK28835.1"/>
    <property type="status" value="JOINED"/>
    <property type="molecule type" value="Genomic_DNA"/>
</dbReference>
<dbReference type="EMBL" id="AF323646">
    <property type="protein sequence ID" value="AAK28835.1"/>
    <property type="status" value="JOINED"/>
    <property type="molecule type" value="Genomic_DNA"/>
</dbReference>
<dbReference type="EMBL" id="AF323647">
    <property type="protein sequence ID" value="AAK28835.1"/>
    <property type="status" value="JOINED"/>
    <property type="molecule type" value="Genomic_DNA"/>
</dbReference>
<dbReference type="EMBL" id="AF323648">
    <property type="protein sequence ID" value="AAK28835.1"/>
    <property type="status" value="JOINED"/>
    <property type="molecule type" value="Genomic_DNA"/>
</dbReference>
<dbReference type="EMBL" id="AF323649">
    <property type="protein sequence ID" value="AAK28835.1"/>
    <property type="status" value="JOINED"/>
    <property type="molecule type" value="Genomic_DNA"/>
</dbReference>
<dbReference type="EMBL" id="AF323650">
    <property type="protein sequence ID" value="AAK28835.1"/>
    <property type="status" value="JOINED"/>
    <property type="molecule type" value="Genomic_DNA"/>
</dbReference>
<dbReference type="EMBL" id="AF323651">
    <property type="protein sequence ID" value="AAK28835.1"/>
    <property type="status" value="JOINED"/>
    <property type="molecule type" value="Genomic_DNA"/>
</dbReference>
<dbReference type="EMBL" id="AF323652">
    <property type="protein sequence ID" value="AAK28835.1"/>
    <property type="status" value="JOINED"/>
    <property type="molecule type" value="Genomic_DNA"/>
</dbReference>
<dbReference type="EMBL" id="AF323653">
    <property type="protein sequence ID" value="AAK28835.1"/>
    <property type="status" value="JOINED"/>
    <property type="molecule type" value="Genomic_DNA"/>
</dbReference>
<dbReference type="EMBL" id="AF323654">
    <property type="protein sequence ID" value="AAK28835.1"/>
    <property type="status" value="JOINED"/>
    <property type="molecule type" value="Genomic_DNA"/>
</dbReference>
<dbReference type="EMBL" id="AF323655">
    <property type="protein sequence ID" value="AAK28835.1"/>
    <property type="status" value="JOINED"/>
    <property type="molecule type" value="Genomic_DNA"/>
</dbReference>
<dbReference type="EMBL" id="AF323656">
    <property type="protein sequence ID" value="AAK28835.1"/>
    <property type="status" value="JOINED"/>
    <property type="molecule type" value="Genomic_DNA"/>
</dbReference>
<dbReference type="EMBL" id="AF323657">
    <property type="protein sequence ID" value="AAK28835.1"/>
    <property type="status" value="JOINED"/>
    <property type="molecule type" value="Genomic_DNA"/>
</dbReference>
<dbReference type="EMBL" id="AF323662">
    <property type="protein sequence ID" value="AAK28840.1"/>
    <property type="molecule type" value="mRNA"/>
</dbReference>
<dbReference type="EMBL" id="AF323658">
    <property type="protein sequence ID" value="AAK28837.1"/>
    <property type="molecule type" value="Genomic_DNA"/>
</dbReference>
<dbReference type="EMBL" id="AF323643">
    <property type="protein sequence ID" value="AAK28837.1"/>
    <property type="status" value="JOINED"/>
    <property type="molecule type" value="Genomic_DNA"/>
</dbReference>
<dbReference type="EMBL" id="AF323645">
    <property type="protein sequence ID" value="AAK28837.1"/>
    <property type="status" value="JOINED"/>
    <property type="molecule type" value="Genomic_DNA"/>
</dbReference>
<dbReference type="EMBL" id="AF323646">
    <property type="protein sequence ID" value="AAK28837.1"/>
    <property type="status" value="JOINED"/>
    <property type="molecule type" value="Genomic_DNA"/>
</dbReference>
<dbReference type="EMBL" id="AF323647">
    <property type="protein sequence ID" value="AAK28837.1"/>
    <property type="status" value="JOINED"/>
    <property type="molecule type" value="Genomic_DNA"/>
</dbReference>
<dbReference type="EMBL" id="AF323648">
    <property type="protein sequence ID" value="AAK28837.1"/>
    <property type="status" value="JOINED"/>
    <property type="molecule type" value="Genomic_DNA"/>
</dbReference>
<dbReference type="EMBL" id="AF323649">
    <property type="protein sequence ID" value="AAK28837.1"/>
    <property type="status" value="JOINED"/>
    <property type="molecule type" value="Genomic_DNA"/>
</dbReference>
<dbReference type="EMBL" id="AF323650">
    <property type="protein sequence ID" value="AAK28837.1"/>
    <property type="status" value="JOINED"/>
    <property type="molecule type" value="Genomic_DNA"/>
</dbReference>
<dbReference type="EMBL" id="AF323651">
    <property type="protein sequence ID" value="AAK28837.1"/>
    <property type="status" value="JOINED"/>
    <property type="molecule type" value="Genomic_DNA"/>
</dbReference>
<dbReference type="EMBL" id="AF323652">
    <property type="protein sequence ID" value="AAK28837.1"/>
    <property type="status" value="JOINED"/>
    <property type="molecule type" value="Genomic_DNA"/>
</dbReference>
<dbReference type="EMBL" id="AF323653">
    <property type="protein sequence ID" value="AAK28837.1"/>
    <property type="status" value="JOINED"/>
    <property type="molecule type" value="Genomic_DNA"/>
</dbReference>
<dbReference type="EMBL" id="AF323654">
    <property type="protein sequence ID" value="AAK28837.1"/>
    <property type="status" value="JOINED"/>
    <property type="molecule type" value="Genomic_DNA"/>
</dbReference>
<dbReference type="EMBL" id="AF323655">
    <property type="protein sequence ID" value="AAK28837.1"/>
    <property type="status" value="JOINED"/>
    <property type="molecule type" value="Genomic_DNA"/>
</dbReference>
<dbReference type="EMBL" id="AF323656">
    <property type="protein sequence ID" value="AAK28837.1"/>
    <property type="status" value="JOINED"/>
    <property type="molecule type" value="Genomic_DNA"/>
</dbReference>
<dbReference type="EMBL" id="AF323657">
    <property type="protein sequence ID" value="AAK28837.1"/>
    <property type="status" value="JOINED"/>
    <property type="molecule type" value="Genomic_DNA"/>
</dbReference>
<dbReference type="EMBL" id="AF323658">
    <property type="protein sequence ID" value="AAK28834.1"/>
    <property type="molecule type" value="Genomic_DNA"/>
</dbReference>
<dbReference type="EMBL" id="AF323645">
    <property type="protein sequence ID" value="AAK28834.1"/>
    <property type="status" value="JOINED"/>
    <property type="molecule type" value="Genomic_DNA"/>
</dbReference>
<dbReference type="EMBL" id="AF323646">
    <property type="protein sequence ID" value="AAK28834.1"/>
    <property type="status" value="JOINED"/>
    <property type="molecule type" value="Genomic_DNA"/>
</dbReference>
<dbReference type="EMBL" id="AF323647">
    <property type="protein sequence ID" value="AAK28834.1"/>
    <property type="status" value="JOINED"/>
    <property type="molecule type" value="Genomic_DNA"/>
</dbReference>
<dbReference type="EMBL" id="AF323648">
    <property type="protein sequence ID" value="AAK28834.1"/>
    <property type="status" value="JOINED"/>
    <property type="molecule type" value="Genomic_DNA"/>
</dbReference>
<dbReference type="EMBL" id="AF323649">
    <property type="protein sequence ID" value="AAK28834.1"/>
    <property type="status" value="JOINED"/>
    <property type="molecule type" value="Genomic_DNA"/>
</dbReference>
<dbReference type="EMBL" id="AF323650">
    <property type="protein sequence ID" value="AAK28834.1"/>
    <property type="status" value="JOINED"/>
    <property type="molecule type" value="Genomic_DNA"/>
</dbReference>
<dbReference type="EMBL" id="AF323651">
    <property type="protein sequence ID" value="AAK28834.1"/>
    <property type="status" value="JOINED"/>
    <property type="molecule type" value="Genomic_DNA"/>
</dbReference>
<dbReference type="EMBL" id="AF323652">
    <property type="protein sequence ID" value="AAK28834.1"/>
    <property type="status" value="JOINED"/>
    <property type="molecule type" value="Genomic_DNA"/>
</dbReference>
<dbReference type="EMBL" id="AF323653">
    <property type="protein sequence ID" value="AAK28834.1"/>
    <property type="status" value="JOINED"/>
    <property type="molecule type" value="Genomic_DNA"/>
</dbReference>
<dbReference type="EMBL" id="AF323654">
    <property type="protein sequence ID" value="AAK28834.1"/>
    <property type="status" value="JOINED"/>
    <property type="molecule type" value="Genomic_DNA"/>
</dbReference>
<dbReference type="EMBL" id="AF323655">
    <property type="protein sequence ID" value="AAK28834.1"/>
    <property type="status" value="JOINED"/>
    <property type="molecule type" value="Genomic_DNA"/>
</dbReference>
<dbReference type="EMBL" id="AF323656">
    <property type="protein sequence ID" value="AAK28834.1"/>
    <property type="status" value="JOINED"/>
    <property type="molecule type" value="Genomic_DNA"/>
</dbReference>
<dbReference type="EMBL" id="AF323657">
    <property type="protein sequence ID" value="AAK28834.1"/>
    <property type="status" value="JOINED"/>
    <property type="molecule type" value="Genomic_DNA"/>
</dbReference>
<dbReference type="EMBL" id="AF323661">
    <property type="protein sequence ID" value="AAK28839.1"/>
    <property type="molecule type" value="mRNA"/>
</dbReference>
<dbReference type="EMBL" id="AY048757">
    <property type="protein sequence ID" value="AAL06598.1"/>
    <property type="molecule type" value="mRNA"/>
</dbReference>
<dbReference type="EMBL" id="AP001746">
    <property type="protein sequence ID" value="BAA95530.1"/>
    <property type="status" value="ALT_INIT"/>
    <property type="molecule type" value="Genomic_DNA"/>
</dbReference>
<dbReference type="EMBL" id="BC029158">
    <property type="protein sequence ID" value="AAH29158.2"/>
    <property type="molecule type" value="mRNA"/>
</dbReference>
<dbReference type="EMBL" id="U34919">
    <property type="protein sequence ID" value="AAC51098.1"/>
    <property type="status" value="ALT_INIT"/>
    <property type="molecule type" value="mRNA"/>
</dbReference>
<dbReference type="CCDS" id="CCDS13681.1">
    <molecule id="P45844-5"/>
</dbReference>
<dbReference type="CCDS" id="CCDS13682.1">
    <molecule id="P45844-1"/>
</dbReference>
<dbReference type="CCDS" id="CCDS13683.1">
    <molecule id="P45844-2"/>
</dbReference>
<dbReference type="CCDS" id="CCDS42937.1">
    <molecule id="P45844-3"/>
</dbReference>
<dbReference type="CCDS" id="CCDS42938.1">
    <molecule id="P45844-4"/>
</dbReference>
<dbReference type="RefSeq" id="NP_004906.3">
    <molecule id="P45844-1"/>
    <property type="nucleotide sequence ID" value="NM_004915.3"/>
</dbReference>
<dbReference type="RefSeq" id="NP_058198.2">
    <molecule id="P45844-4"/>
    <property type="nucleotide sequence ID" value="NM_016818.2"/>
</dbReference>
<dbReference type="RefSeq" id="NP_997057.1">
    <molecule id="P45844-2"/>
    <property type="nucleotide sequence ID" value="NM_207174.1"/>
</dbReference>
<dbReference type="RefSeq" id="NP_997510.1">
    <molecule id="P45844-3"/>
    <property type="nucleotide sequence ID" value="NM_207627.2"/>
</dbReference>
<dbReference type="RefSeq" id="NP_997511.1">
    <molecule id="P45844-7"/>
    <property type="nucleotide sequence ID" value="NM_207628.1"/>
</dbReference>
<dbReference type="RefSeq" id="NP_997512.1">
    <molecule id="P45844-5"/>
    <property type="nucleotide sequence ID" value="NM_207629.2"/>
</dbReference>
<dbReference type="PDB" id="7FDV">
    <property type="method" value="EM"/>
    <property type="resolution" value="3.26 A"/>
    <property type="chains" value="A/D=1-678"/>
</dbReference>
<dbReference type="PDB" id="7OZ1">
    <property type="method" value="EM"/>
    <property type="resolution" value="4.00 A"/>
    <property type="chains" value="A/B=1-678"/>
</dbReference>
<dbReference type="PDB" id="7R8C">
    <property type="method" value="EM"/>
    <property type="resolution" value="3.70 A"/>
    <property type="chains" value="A/B=1-678"/>
</dbReference>
<dbReference type="PDB" id="7R8D">
    <property type="method" value="EM"/>
    <property type="resolution" value="3.20 A"/>
    <property type="chains" value="A/B=1-678"/>
</dbReference>
<dbReference type="PDB" id="7R8E">
    <property type="method" value="EM"/>
    <property type="resolution" value="3.68 A"/>
    <property type="chains" value="A/B=1-678"/>
</dbReference>
<dbReference type="PDBsum" id="7FDV"/>
<dbReference type="PDBsum" id="7OZ1"/>
<dbReference type="PDBsum" id="7R8C"/>
<dbReference type="PDBsum" id="7R8D"/>
<dbReference type="PDBsum" id="7R8E"/>
<dbReference type="EMDB" id="EMD-13118"/>
<dbReference type="EMDB" id="EMD-24315"/>
<dbReference type="EMDB" id="EMD-24316"/>
<dbReference type="EMDB" id="EMD-24317"/>
<dbReference type="EMDB" id="EMD-31547"/>
<dbReference type="SMR" id="P45844"/>
<dbReference type="BioGRID" id="114980">
    <property type="interactions" value="68"/>
</dbReference>
<dbReference type="FunCoup" id="P45844">
    <property type="interactions" value="922"/>
</dbReference>
<dbReference type="IntAct" id="P45844">
    <property type="interactions" value="11"/>
</dbReference>
<dbReference type="MINT" id="P45844"/>
<dbReference type="STRING" id="9606.ENSP00000354995"/>
<dbReference type="DrugBank" id="DB00171">
    <property type="generic name" value="ATP"/>
</dbReference>
<dbReference type="DrugBank" id="DB00163">
    <property type="generic name" value="Vitamin E"/>
</dbReference>
<dbReference type="SwissLipids" id="SLP:000000420"/>
<dbReference type="TCDB" id="3.A.1.204.12">
    <property type="family name" value="the atp-binding cassette (abc) superfamily"/>
</dbReference>
<dbReference type="GlyGen" id="P45844">
    <property type="glycosylation" value="3 sites, 1 N-linked glycan (1 site), 1 O-linked glycan (2 sites)"/>
</dbReference>
<dbReference type="iPTMnet" id="P45844"/>
<dbReference type="PhosphoSitePlus" id="P45844"/>
<dbReference type="SwissPalm" id="P45844"/>
<dbReference type="BioMuta" id="ABCG1"/>
<dbReference type="DMDM" id="17433715"/>
<dbReference type="jPOST" id="P45844"/>
<dbReference type="MassIVE" id="P45844"/>
<dbReference type="PaxDb" id="9606-ENSP00000354995"/>
<dbReference type="PeptideAtlas" id="P45844"/>
<dbReference type="ProteomicsDB" id="55678">
    <molecule id="P45844-1"/>
</dbReference>
<dbReference type="ProteomicsDB" id="55679">
    <molecule id="P45844-2"/>
</dbReference>
<dbReference type="ProteomicsDB" id="55680">
    <molecule id="P45844-3"/>
</dbReference>
<dbReference type="ProteomicsDB" id="55681">
    <molecule id="P45844-4"/>
</dbReference>
<dbReference type="ProteomicsDB" id="55682">
    <molecule id="P45844-5"/>
</dbReference>
<dbReference type="ProteomicsDB" id="55683">
    <molecule id="P45844-6"/>
</dbReference>
<dbReference type="ProteomicsDB" id="55684">
    <molecule id="P45844-7"/>
</dbReference>
<dbReference type="ProteomicsDB" id="55685">
    <molecule id="P45844-8"/>
</dbReference>
<dbReference type="TopDownProteomics" id="P45844-8">
    <molecule id="P45844-8"/>
</dbReference>
<dbReference type="Antibodypedia" id="23734">
    <property type="antibodies" value="393 antibodies from 35 providers"/>
</dbReference>
<dbReference type="DNASU" id="9619"/>
<dbReference type="Ensembl" id="ENST00000343687.7">
    <molecule id="P45844-2"/>
    <property type="protein sequence ID" value="ENSP00000339744.3"/>
    <property type="gene ID" value="ENSG00000160179.20"/>
</dbReference>
<dbReference type="Ensembl" id="ENST00000347800.6">
    <molecule id="P45844-5"/>
    <property type="protein sequence ID" value="ENSP00000291524.4"/>
    <property type="gene ID" value="ENSG00000160179.20"/>
</dbReference>
<dbReference type="Ensembl" id="ENST00000361802.7">
    <molecule id="P45844-1"/>
    <property type="protein sequence ID" value="ENSP00000354995.2"/>
    <property type="gene ID" value="ENSG00000160179.20"/>
</dbReference>
<dbReference type="Ensembl" id="ENST00000398449.8">
    <molecule id="P45844-4"/>
    <property type="protein sequence ID" value="ENSP00000381467.3"/>
    <property type="gene ID" value="ENSG00000160179.20"/>
</dbReference>
<dbReference type="Ensembl" id="ENST00000398457.6">
    <molecule id="P45844-3"/>
    <property type="protein sequence ID" value="ENSP00000381475.2"/>
    <property type="gene ID" value="ENSG00000160179.20"/>
</dbReference>
<dbReference type="GeneID" id="9619"/>
<dbReference type="KEGG" id="hsa:9619"/>
<dbReference type="MANE-Select" id="ENST00000398449.8">
    <molecule id="P45844-4"/>
    <property type="protein sequence ID" value="ENSP00000381467.3"/>
    <property type="RefSeq nucleotide sequence ID" value="NM_016818.3"/>
    <property type="RefSeq protein sequence ID" value="NP_058198.2"/>
</dbReference>
<dbReference type="UCSC" id="uc002zan.3">
    <molecule id="P45844-1"/>
    <property type="organism name" value="human"/>
</dbReference>
<dbReference type="AGR" id="HGNC:73"/>
<dbReference type="CTD" id="9619"/>
<dbReference type="DisGeNET" id="9619"/>
<dbReference type="GeneCards" id="ABCG1"/>
<dbReference type="HGNC" id="HGNC:73">
    <property type="gene designation" value="ABCG1"/>
</dbReference>
<dbReference type="HPA" id="ENSG00000160179">
    <property type="expression patterns" value="Low tissue specificity"/>
</dbReference>
<dbReference type="MIM" id="603076">
    <property type="type" value="gene"/>
</dbReference>
<dbReference type="neXtProt" id="NX_P45844"/>
<dbReference type="OpenTargets" id="ENSG00000160179"/>
<dbReference type="PharmGKB" id="PA24408"/>
<dbReference type="VEuPathDB" id="HostDB:ENSG00000160179"/>
<dbReference type="eggNOG" id="KOG0061">
    <property type="taxonomic scope" value="Eukaryota"/>
</dbReference>
<dbReference type="GeneTree" id="ENSGT00940000160131"/>
<dbReference type="HOGENOM" id="CLU_000604_57_6_1"/>
<dbReference type="InParanoid" id="P45844"/>
<dbReference type="OMA" id="WWKQFWL"/>
<dbReference type="OrthoDB" id="66620at2759"/>
<dbReference type="PAN-GO" id="P45844">
    <property type="GO annotations" value="5 GO annotations based on evolutionary models"/>
</dbReference>
<dbReference type="PhylomeDB" id="P45844"/>
<dbReference type="TreeFam" id="TF105210"/>
<dbReference type="PathwayCommons" id="P45844"/>
<dbReference type="Reactome" id="R-HSA-1369062">
    <property type="pathway name" value="ABC transporters in lipid homeostasis"/>
</dbReference>
<dbReference type="Reactome" id="R-HSA-8964058">
    <property type="pathway name" value="HDL remodeling"/>
</dbReference>
<dbReference type="Reactome" id="R-HSA-9029569">
    <property type="pathway name" value="NR1H3 &amp; NR1H2 regulate gene expression linked to cholesterol transport and efflux"/>
</dbReference>
<dbReference type="SignaLink" id="P45844"/>
<dbReference type="SIGNOR" id="P45844"/>
<dbReference type="BioGRID-ORCS" id="9619">
    <property type="hits" value="109 hits in 1158 CRISPR screens"/>
</dbReference>
<dbReference type="ChiTaRS" id="ABCG1">
    <property type="organism name" value="human"/>
</dbReference>
<dbReference type="GeneWiki" id="ABCG1"/>
<dbReference type="GenomeRNAi" id="9619"/>
<dbReference type="Pharos" id="P45844">
    <property type="development level" value="Tbio"/>
</dbReference>
<dbReference type="PRO" id="PR:P45844"/>
<dbReference type="Proteomes" id="UP000005640">
    <property type="component" value="Chromosome 21"/>
</dbReference>
<dbReference type="RNAct" id="P45844">
    <property type="molecule type" value="protein"/>
</dbReference>
<dbReference type="Bgee" id="ENSG00000160179">
    <property type="expression patterns" value="Expressed in right adrenal gland and 191 other cell types or tissues"/>
</dbReference>
<dbReference type="ExpressionAtlas" id="P45844">
    <property type="expression patterns" value="baseline and differential"/>
</dbReference>
<dbReference type="GO" id="GO:0005789">
    <property type="term" value="C:endoplasmic reticulum membrane"/>
    <property type="evidence" value="ECO:0007669"/>
    <property type="project" value="UniProtKB-SubCell"/>
</dbReference>
<dbReference type="GO" id="GO:0005768">
    <property type="term" value="C:endosome"/>
    <property type="evidence" value="ECO:0000250"/>
    <property type="project" value="BHF-UCL"/>
</dbReference>
<dbReference type="GO" id="GO:0009897">
    <property type="term" value="C:external side of plasma membrane"/>
    <property type="evidence" value="ECO:0000314"/>
    <property type="project" value="BHF-UCL"/>
</dbReference>
<dbReference type="GO" id="GO:0005794">
    <property type="term" value="C:Golgi apparatus"/>
    <property type="evidence" value="ECO:0000314"/>
    <property type="project" value="HPA"/>
</dbReference>
<dbReference type="GO" id="GO:0000139">
    <property type="term" value="C:Golgi membrane"/>
    <property type="evidence" value="ECO:0007669"/>
    <property type="project" value="UniProtKB-SubCell"/>
</dbReference>
<dbReference type="GO" id="GO:0043231">
    <property type="term" value="C:intracellular membrane-bounded organelle"/>
    <property type="evidence" value="ECO:0000314"/>
    <property type="project" value="HPA"/>
</dbReference>
<dbReference type="GO" id="GO:0005739">
    <property type="term" value="C:mitochondrion"/>
    <property type="evidence" value="ECO:0000314"/>
    <property type="project" value="UniProtKB"/>
</dbReference>
<dbReference type="GO" id="GO:0005654">
    <property type="term" value="C:nucleoplasm"/>
    <property type="evidence" value="ECO:0000314"/>
    <property type="project" value="HPA"/>
</dbReference>
<dbReference type="GO" id="GO:0005886">
    <property type="term" value="C:plasma membrane"/>
    <property type="evidence" value="ECO:0000314"/>
    <property type="project" value="UniProtKB"/>
</dbReference>
<dbReference type="GO" id="GO:0055037">
    <property type="term" value="C:recycling endosome"/>
    <property type="evidence" value="ECO:0000250"/>
    <property type="project" value="BHF-UCL"/>
</dbReference>
<dbReference type="GO" id="GO:0034041">
    <property type="term" value="F:ABC-type sterol transporter activity"/>
    <property type="evidence" value="ECO:0000314"/>
    <property type="project" value="BHF-UCL"/>
</dbReference>
<dbReference type="GO" id="GO:0043531">
    <property type="term" value="F:ADP binding"/>
    <property type="evidence" value="ECO:0000314"/>
    <property type="project" value="BHF-UCL"/>
</dbReference>
<dbReference type="GO" id="GO:0005524">
    <property type="term" value="F:ATP binding"/>
    <property type="evidence" value="ECO:0000314"/>
    <property type="project" value="BHF-UCL"/>
</dbReference>
<dbReference type="GO" id="GO:0016887">
    <property type="term" value="F:ATP hydrolysis activity"/>
    <property type="evidence" value="ECO:0007669"/>
    <property type="project" value="InterPro"/>
</dbReference>
<dbReference type="GO" id="GO:0015485">
    <property type="term" value="F:cholesterol binding"/>
    <property type="evidence" value="ECO:0000305"/>
    <property type="project" value="BHF-UCL"/>
</dbReference>
<dbReference type="GO" id="GO:0120020">
    <property type="term" value="F:cholesterol transfer activity"/>
    <property type="evidence" value="ECO:0000314"/>
    <property type="project" value="BHF-UCL"/>
</dbReference>
<dbReference type="GO" id="GO:0140328">
    <property type="term" value="F:floppase activity"/>
    <property type="evidence" value="ECO:0000314"/>
    <property type="project" value="ARUK-UCL"/>
</dbReference>
<dbReference type="GO" id="GO:0090554">
    <property type="term" value="F:phosphatidylcholine floppase activity"/>
    <property type="evidence" value="ECO:0000314"/>
    <property type="project" value="BHF-UCL"/>
</dbReference>
<dbReference type="GO" id="GO:0005543">
    <property type="term" value="F:phospholipid binding"/>
    <property type="evidence" value="ECO:0000305"/>
    <property type="project" value="BHF-UCL"/>
</dbReference>
<dbReference type="GO" id="GO:0046982">
    <property type="term" value="F:protein heterodimerization activity"/>
    <property type="evidence" value="ECO:0000353"/>
    <property type="project" value="BHF-UCL"/>
</dbReference>
<dbReference type="GO" id="GO:0042803">
    <property type="term" value="F:protein homodimerization activity"/>
    <property type="evidence" value="ECO:0000314"/>
    <property type="project" value="UniProtKB"/>
</dbReference>
<dbReference type="GO" id="GO:0019534">
    <property type="term" value="F:toxin transmembrane transporter activity"/>
    <property type="evidence" value="ECO:0000314"/>
    <property type="project" value="BHF-UCL"/>
</dbReference>
<dbReference type="GO" id="GO:0042987">
    <property type="term" value="P:amyloid precursor protein catabolic process"/>
    <property type="evidence" value="ECO:0000314"/>
    <property type="project" value="BHF-UCL"/>
</dbReference>
<dbReference type="GO" id="GO:0071403">
    <property type="term" value="P:cellular response to high density lipoprotein particle stimulus"/>
    <property type="evidence" value="ECO:0007669"/>
    <property type="project" value="Ensembl"/>
</dbReference>
<dbReference type="GO" id="GO:0033344">
    <property type="term" value="P:cholesterol efflux"/>
    <property type="evidence" value="ECO:0000314"/>
    <property type="project" value="BHF-UCL"/>
</dbReference>
<dbReference type="GO" id="GO:0042632">
    <property type="term" value="P:cholesterol homeostasis"/>
    <property type="evidence" value="ECO:0000314"/>
    <property type="project" value="BHF-UCL"/>
</dbReference>
<dbReference type="GO" id="GO:0008203">
    <property type="term" value="P:cholesterol metabolic process"/>
    <property type="evidence" value="ECO:0000314"/>
    <property type="project" value="BHF-UCL"/>
</dbReference>
<dbReference type="GO" id="GO:0034436">
    <property type="term" value="P:glycoprotein transport"/>
    <property type="evidence" value="ECO:0000314"/>
    <property type="project" value="BHF-UCL"/>
</dbReference>
<dbReference type="GO" id="GO:0034375">
    <property type="term" value="P:high-density lipoprotein particle remodeling"/>
    <property type="evidence" value="ECO:0000250"/>
    <property type="project" value="BHF-UCL"/>
</dbReference>
<dbReference type="GO" id="GO:0032367">
    <property type="term" value="P:intracellular cholesterol transport"/>
    <property type="evidence" value="ECO:0000315"/>
    <property type="project" value="BHF-UCL"/>
</dbReference>
<dbReference type="GO" id="GO:0034374">
    <property type="term" value="P:low-density lipoprotein particle remodeling"/>
    <property type="evidence" value="ECO:0000250"/>
    <property type="project" value="BHF-UCL"/>
</dbReference>
<dbReference type="GO" id="GO:0010887">
    <property type="term" value="P:negative regulation of cholesterol storage"/>
    <property type="evidence" value="ECO:0000304"/>
    <property type="project" value="BHF-UCL"/>
</dbReference>
<dbReference type="GO" id="GO:0010745">
    <property type="term" value="P:negative regulation of macrophage derived foam cell differentiation"/>
    <property type="evidence" value="ECO:0000304"/>
    <property type="project" value="BHF-UCL"/>
</dbReference>
<dbReference type="GO" id="GO:0033700">
    <property type="term" value="P:phospholipid efflux"/>
    <property type="evidence" value="ECO:0000315"/>
    <property type="project" value="BHF-UCL"/>
</dbReference>
<dbReference type="GO" id="GO:0055091">
    <property type="term" value="P:phospholipid homeostasis"/>
    <property type="evidence" value="ECO:0000315"/>
    <property type="project" value="BHF-UCL"/>
</dbReference>
<dbReference type="GO" id="GO:1902004">
    <property type="term" value="P:positive regulation of amyloid-beta formation"/>
    <property type="evidence" value="ECO:0000314"/>
    <property type="project" value="ARUK-UCL"/>
</dbReference>
<dbReference type="GO" id="GO:0045542">
    <property type="term" value="P:positive regulation of cholesterol biosynthetic process"/>
    <property type="evidence" value="ECO:0000250"/>
    <property type="project" value="BHF-UCL"/>
</dbReference>
<dbReference type="GO" id="GO:0010875">
    <property type="term" value="P:positive regulation of cholesterol efflux"/>
    <property type="evidence" value="ECO:0007669"/>
    <property type="project" value="Ensembl"/>
</dbReference>
<dbReference type="GO" id="GO:0050714">
    <property type="term" value="P:positive regulation of protein secretion"/>
    <property type="evidence" value="ECO:0000314"/>
    <property type="project" value="ARUK-UCL"/>
</dbReference>
<dbReference type="GO" id="GO:0090181">
    <property type="term" value="P:regulation of cholesterol metabolic process"/>
    <property type="evidence" value="ECO:0000250"/>
    <property type="project" value="BHF-UCL"/>
</dbReference>
<dbReference type="GO" id="GO:0033993">
    <property type="term" value="P:response to lipid"/>
    <property type="evidence" value="ECO:0000314"/>
    <property type="project" value="BHF-UCL"/>
</dbReference>
<dbReference type="GO" id="GO:0043691">
    <property type="term" value="P:reverse cholesterol transport"/>
    <property type="evidence" value="ECO:0000250"/>
    <property type="project" value="BHF-UCL"/>
</dbReference>
<dbReference type="GO" id="GO:0055085">
    <property type="term" value="P:transmembrane transport"/>
    <property type="evidence" value="ECO:0000318"/>
    <property type="project" value="GO_Central"/>
</dbReference>
<dbReference type="GO" id="GO:1990961">
    <property type="term" value="P:xenobiotic detoxification by transmembrane export across the plasma membrane"/>
    <property type="evidence" value="ECO:0000304"/>
    <property type="project" value="BHF-UCL"/>
</dbReference>
<dbReference type="CDD" id="cd03213">
    <property type="entry name" value="ABCG_EPDR"/>
    <property type="match status" value="1"/>
</dbReference>
<dbReference type="FunFam" id="3.40.50.300:FF:000267">
    <property type="entry name" value="ATP-binding cassette, sub-family G (WHITE), member 1"/>
    <property type="match status" value="1"/>
</dbReference>
<dbReference type="Gene3D" id="3.40.50.300">
    <property type="entry name" value="P-loop containing nucleotide triphosphate hydrolases"/>
    <property type="match status" value="1"/>
</dbReference>
<dbReference type="InterPro" id="IPR003593">
    <property type="entry name" value="AAA+_ATPase"/>
</dbReference>
<dbReference type="InterPro" id="IPR013525">
    <property type="entry name" value="ABC2_TM"/>
</dbReference>
<dbReference type="InterPro" id="IPR003439">
    <property type="entry name" value="ABC_transporter-like_ATP-bd"/>
</dbReference>
<dbReference type="InterPro" id="IPR017871">
    <property type="entry name" value="ABC_transporter-like_CS"/>
</dbReference>
<dbReference type="InterPro" id="IPR043926">
    <property type="entry name" value="ABCG_dom"/>
</dbReference>
<dbReference type="InterPro" id="IPR050352">
    <property type="entry name" value="ABCG_transporters"/>
</dbReference>
<dbReference type="InterPro" id="IPR027417">
    <property type="entry name" value="P-loop_NTPase"/>
</dbReference>
<dbReference type="InterPro" id="IPR005284">
    <property type="entry name" value="Pigment_permease/Abcg"/>
</dbReference>
<dbReference type="NCBIfam" id="TIGR00955">
    <property type="entry name" value="3a01204"/>
    <property type="match status" value="1"/>
</dbReference>
<dbReference type="PANTHER" id="PTHR48041">
    <property type="entry name" value="ABC TRANSPORTER G FAMILY MEMBER 28"/>
    <property type="match status" value="1"/>
</dbReference>
<dbReference type="PANTHER" id="PTHR48041:SF90">
    <property type="entry name" value="ATP-BINDING CASSETTE SUB-FAMILY G MEMBER 1"/>
    <property type="match status" value="1"/>
</dbReference>
<dbReference type="Pfam" id="PF01061">
    <property type="entry name" value="ABC2_membrane"/>
    <property type="match status" value="1"/>
</dbReference>
<dbReference type="Pfam" id="PF19055">
    <property type="entry name" value="ABC2_membrane_7"/>
    <property type="match status" value="1"/>
</dbReference>
<dbReference type="Pfam" id="PF00005">
    <property type="entry name" value="ABC_tran"/>
    <property type="match status" value="1"/>
</dbReference>
<dbReference type="SMART" id="SM00382">
    <property type="entry name" value="AAA"/>
    <property type="match status" value="1"/>
</dbReference>
<dbReference type="SUPFAM" id="SSF52540">
    <property type="entry name" value="P-loop containing nucleoside triphosphate hydrolases"/>
    <property type="match status" value="1"/>
</dbReference>
<dbReference type="PROSITE" id="PS00211">
    <property type="entry name" value="ABC_TRANSPORTER_1"/>
    <property type="match status" value="1"/>
</dbReference>
<dbReference type="PROSITE" id="PS50893">
    <property type="entry name" value="ABC_TRANSPORTER_2"/>
    <property type="match status" value="1"/>
</dbReference>
<sequence>MACLMAAFSVGTAMNASSYSAEMTEPKSVCVSVDEVVSSNMEATETDLLNGHLKKVDNNLTEAQRFSSLPRRAAVNIEFRDLSYSVPEGPWWRKKGYKTLLKGISGKFNSGELVAIMGPSGAGKSTLMNILAGYRETGMKGAVLINGLPRDLRCFRKVSCYIMQDDMLLPHLTVQEAMMVSAHLKLQEKDEGRREMVKEILTALGLLSCANTRTGSLSGGQRKRLAIALELVNNPPVMFFDEPTSGLDSASCFQVVSLMKGLAQGGRSIICTIHQPSAKLFELFDQLYVLSQGQCVYRGKVCNLVPYLRDLGLNCPTYHNPADFVMEVASGEYGDQNSRLVRAVREGMCDSDHKRDLGGDAEVNPFLWHRPSEEVKQTKRLKGLRKDSSSMEGCHSFSASCLTQFCILFKRTFLSIMRDSVLTHLRITSHIGIGLLIGLLYLGIGNEAKKVLSNSGFLFFSMLFLMFAALMPTVLTFPLEMGVFLREHLNYWYSLKAYYLAKTMADVPFQIMFPVAYCSIVYWMTSQPSDAVRFVLFAALGTMTSLVAQSLGLLIGAASTSLQVATFVGPVTAIPVLLFSGFFVSFDTIPTYLQWMSYISYVRYGFEGVILSIYGLDREDLHCDIDETCHFQKSEAILRELDVENAKLYLDFIVLGIFFISLRLIAYFVLRYKIRAER</sequence>
<organism>
    <name type="scientific">Homo sapiens</name>
    <name type="common">Human</name>
    <dbReference type="NCBI Taxonomy" id="9606"/>
    <lineage>
        <taxon>Eukaryota</taxon>
        <taxon>Metazoa</taxon>
        <taxon>Chordata</taxon>
        <taxon>Craniata</taxon>
        <taxon>Vertebrata</taxon>
        <taxon>Euteleostomi</taxon>
        <taxon>Mammalia</taxon>
        <taxon>Eutheria</taxon>
        <taxon>Euarchontoglires</taxon>
        <taxon>Primates</taxon>
        <taxon>Haplorrhini</taxon>
        <taxon>Catarrhini</taxon>
        <taxon>Hominidae</taxon>
        <taxon>Homo</taxon>
    </lineage>
</organism>
<evidence type="ECO:0000255" key="1"/>
<evidence type="ECO:0000255" key="2">
    <source>
        <dbReference type="PROSITE-ProRule" id="PRU00434"/>
    </source>
</evidence>
<evidence type="ECO:0000269" key="3">
    <source>
    </source>
</evidence>
<evidence type="ECO:0000269" key="4">
    <source>
    </source>
</evidence>
<evidence type="ECO:0000269" key="5">
    <source>
    </source>
</evidence>
<evidence type="ECO:0000269" key="6">
    <source>
    </source>
</evidence>
<evidence type="ECO:0000269" key="7">
    <source>
    </source>
</evidence>
<evidence type="ECO:0000269" key="8">
    <source>
    </source>
</evidence>
<evidence type="ECO:0000269" key="9">
    <source>
    </source>
</evidence>
<evidence type="ECO:0000269" key="10">
    <source>
    </source>
</evidence>
<evidence type="ECO:0000269" key="11">
    <source>
    </source>
</evidence>
<evidence type="ECO:0000269" key="12">
    <source>
    </source>
</evidence>
<evidence type="ECO:0000269" key="13">
    <source>
    </source>
</evidence>
<evidence type="ECO:0000269" key="14">
    <source>
    </source>
</evidence>
<evidence type="ECO:0000303" key="15">
    <source>
    </source>
</evidence>
<evidence type="ECO:0000303" key="16">
    <source>
    </source>
</evidence>
<evidence type="ECO:0000303" key="17">
    <source>
    </source>
</evidence>
<evidence type="ECO:0000303" key="18">
    <source>
    </source>
</evidence>
<evidence type="ECO:0000305" key="19"/>
<evidence type="ECO:0000312" key="20">
    <source>
        <dbReference type="HGNC" id="HGNC:73"/>
    </source>
</evidence>
<evidence type="ECO:0007829" key="21">
    <source>
        <dbReference type="PDB" id="7FDV"/>
    </source>
</evidence>
<evidence type="ECO:0007829" key="22">
    <source>
        <dbReference type="PDB" id="7R8D"/>
    </source>
</evidence>
<keyword id="KW-0002">3D-structure</keyword>
<keyword id="KW-0025">Alternative splicing</keyword>
<keyword id="KW-0067">ATP-binding</keyword>
<keyword id="KW-1003">Cell membrane</keyword>
<keyword id="KW-0256">Endoplasmic reticulum</keyword>
<keyword id="KW-0333">Golgi apparatus</keyword>
<keyword id="KW-0445">Lipid transport</keyword>
<keyword id="KW-0449">Lipoprotein</keyword>
<keyword id="KW-0472">Membrane</keyword>
<keyword id="KW-0547">Nucleotide-binding</keyword>
<keyword id="KW-0564">Palmitate</keyword>
<keyword id="KW-1267">Proteomics identification</keyword>
<keyword id="KW-1185">Reference proteome</keyword>
<keyword id="KW-1278">Translocase</keyword>
<keyword id="KW-0812">Transmembrane</keyword>
<keyword id="KW-1133">Transmembrane helix</keyword>
<keyword id="KW-0813">Transport</keyword>
<comment type="function">
    <text evidence="9 10 13">Catalyzes the efflux of phospholipids such as sphingomyelin, cholesterol and its oxygenated derivatives like 7beta-hydroxycholesterol and this transport is coupled to hydrolysis of ATP (PubMed:17408620, PubMed:24576892). The lipid efflux is ALB-dependent (PubMed:16702602). Is an active component of the macrophage lipid export complex. Could also be involved in intracellular lipid transport processes. The role in cellular lipid homeostasis may not be limited to macrophages. Prevents cell death by transporting cytotoxic 7beta-hydroxycholesterol (PubMed:17408620).</text>
</comment>
<comment type="catalytic activity">
    <reaction evidence="10">
        <text>7beta-hydroxycholesterol(in) + ATP + H2O = 7beta-hydroxycholesterol(out) + ADP + phosphate + H(+)</text>
        <dbReference type="Rhea" id="RHEA:39795"/>
        <dbReference type="ChEBI" id="CHEBI:15377"/>
        <dbReference type="ChEBI" id="CHEBI:15378"/>
        <dbReference type="ChEBI" id="CHEBI:30616"/>
        <dbReference type="ChEBI" id="CHEBI:42989"/>
        <dbReference type="ChEBI" id="CHEBI:43474"/>
        <dbReference type="ChEBI" id="CHEBI:456216"/>
    </reaction>
    <physiologicalReaction direction="left-to-right" evidence="10">
        <dbReference type="Rhea" id="RHEA:39796"/>
    </physiologicalReaction>
</comment>
<comment type="catalytic activity">
    <reaction evidence="9 13">
        <text>cholesterol(in) + ATP + H2O = cholesterol(out) + ADP + phosphate + H(+)</text>
        <dbReference type="Rhea" id="RHEA:39051"/>
        <dbReference type="ChEBI" id="CHEBI:15377"/>
        <dbReference type="ChEBI" id="CHEBI:15378"/>
        <dbReference type="ChEBI" id="CHEBI:16113"/>
        <dbReference type="ChEBI" id="CHEBI:30616"/>
        <dbReference type="ChEBI" id="CHEBI:43474"/>
        <dbReference type="ChEBI" id="CHEBI:456216"/>
    </reaction>
    <physiologicalReaction direction="left-to-right" evidence="10">
        <dbReference type="Rhea" id="RHEA:39052"/>
    </physiologicalReaction>
</comment>
<comment type="catalytic activity">
    <reaction evidence="9">
        <text>an N-(acyl)-sphingosylphosphocholine(in) + ATP + H2O = an N-(acyl)-sphingosylphosphocholine(out) + ADP + phosphate + H(+)</text>
        <dbReference type="Rhea" id="RHEA:46468"/>
        <dbReference type="ChEBI" id="CHEBI:15377"/>
        <dbReference type="ChEBI" id="CHEBI:15378"/>
        <dbReference type="ChEBI" id="CHEBI:30616"/>
        <dbReference type="ChEBI" id="CHEBI:43474"/>
        <dbReference type="ChEBI" id="CHEBI:64583"/>
        <dbReference type="ChEBI" id="CHEBI:456216"/>
    </reaction>
    <physiologicalReaction direction="left-to-right" evidence="9">
        <dbReference type="Rhea" id="RHEA:46469"/>
    </physiologicalReaction>
</comment>
<comment type="catalytic activity">
    <reaction evidence="9">
        <text>a sphingomyelin(in) + ATP + H2O = a sphingomyelin(out) + ADP + phosphate + H(+)</text>
        <dbReference type="Rhea" id="RHEA:38903"/>
        <dbReference type="ChEBI" id="CHEBI:15377"/>
        <dbReference type="ChEBI" id="CHEBI:15378"/>
        <dbReference type="ChEBI" id="CHEBI:17636"/>
        <dbReference type="ChEBI" id="CHEBI:30616"/>
        <dbReference type="ChEBI" id="CHEBI:43474"/>
        <dbReference type="ChEBI" id="CHEBI:456216"/>
    </reaction>
    <physiologicalReaction direction="left-to-right" evidence="9">
        <dbReference type="Rhea" id="RHEA:38904"/>
    </physiologicalReaction>
</comment>
<comment type="activity regulation">
    <text evidence="9">The cholesterol efflux is enhanced by APOA1.</text>
</comment>
<comment type="subunit">
    <text evidence="9 13 14">Homodimer; disulfide-linked (PubMed:16702602). Homooligomer (PubMed:16702602). May form heterodimers with several heterologous partners of the ABCG subfamily. Forms heterodimers with ABCG4 (PubMed:27228027). Interacts with CAV1; this interaction regulates ABCG1-mediated cholesterol efflux (PubMed:24576892).</text>
</comment>
<comment type="interaction">
    <interactant intactId="EBI-8584087">
        <id>P45844-4</id>
    </interactant>
    <interactant intactId="EBI-8584118">
        <id>Q9H172</id>
        <label>ABCG4</label>
    </interactant>
    <organismsDiffer>false</organismsDiffer>
    <experiments>2</experiments>
</comment>
<comment type="interaction">
    <interactant intactId="EBI-8584087">
        <id>P45844-4</id>
    </interactant>
    <interactant intactId="EBI-13059134">
        <id>Q13520</id>
        <label>AQP6</label>
    </interactant>
    <organismsDiffer>false</organismsDiffer>
    <experiments>3</experiments>
</comment>
<comment type="interaction">
    <interactant intactId="EBI-25873349">
        <id>P45844-6</id>
    </interactant>
    <interactant intactId="EBI-21591415">
        <id>P13473-2</id>
        <label>LAMP2</label>
    </interactant>
    <organismsDiffer>false</organismsDiffer>
    <experiments>3</experiments>
</comment>
<comment type="interaction">
    <interactant intactId="EBI-25873349">
        <id>P45844-6</id>
    </interactant>
    <interactant intactId="EBI-5280197">
        <id>O75400-2</id>
        <label>PRPF40A</label>
    </interactant>
    <organismsDiffer>false</organismsDiffer>
    <experiments>3</experiments>
</comment>
<comment type="interaction">
    <interactant intactId="EBI-25873349">
        <id>P45844-6</id>
    </interactant>
    <interactant intactId="EBI-2623095">
        <id>Q9Y371</id>
        <label>SH3GLB1</label>
    </interactant>
    <organismsDiffer>false</organismsDiffer>
    <experiments>3</experiments>
</comment>
<comment type="subcellular location">
    <subcellularLocation>
        <location evidence="11">Endoplasmic reticulum membrane</location>
        <topology evidence="11">Multi-pass membrane protein</topology>
    </subcellularLocation>
    <subcellularLocation>
        <location evidence="11">Golgi apparatus membrane</location>
        <topology evidence="11">Multi-pass membrane protein</topology>
    </subcellularLocation>
    <subcellularLocation>
        <location evidence="9 13">Cell membrane</location>
    </subcellularLocation>
    <text>Predominantly localized in the intracellular compartments mainly associated with the endoplasmic reticulum (ER) and Golgi membranes.</text>
</comment>
<comment type="alternative products">
    <event type="alternative splicing"/>
    <isoform>
        <id>P45844-1</id>
        <name>1</name>
        <sequence type="displayed"/>
    </isoform>
    <isoform>
        <id>P45844-2</id>
        <name>2</name>
        <name>J</name>
        <sequence type="described" ref="VSP_000047 VSP_000051"/>
    </isoform>
    <isoform>
        <id>P45844-3</id>
        <name>3</name>
        <name>ABDE</name>
        <sequence type="described" ref="VSP_000048 VSP_000051"/>
    </isoform>
    <isoform>
        <id>P45844-4</id>
        <name>4</name>
        <name>G</name>
        <sequence type="described" ref="VSP_000051"/>
    </isoform>
    <isoform>
        <id>P45844-5</id>
        <name>5</name>
        <name>F</name>
        <sequence type="described" ref="VSP_000049 VSP_000051"/>
    </isoform>
    <isoform>
        <id>P45844-6</id>
        <name>6</name>
        <name>HI</name>
        <sequence type="described" ref="VSP_000046 VSP_000051"/>
    </isoform>
    <isoform>
        <id>P45844-7</id>
        <name>7</name>
        <name>C</name>
        <sequence type="described" ref="VSP_000050 VSP_000051"/>
    </isoform>
    <isoform>
        <id>P45844-8</id>
        <name>8</name>
        <sequence type="described" ref="VSP_010718"/>
    </isoform>
    <text>Additional isoforms seem to exist.</text>
</comment>
<comment type="tissue specificity">
    <text evidence="6">Expressed in several tissues. Expressed in macrophages; expression is increased in macrophages from patients with Tangier disease.</text>
</comment>
<comment type="induction">
    <text evidence="3 4 5 8 9 10">Strongly induced in monocyte-derived macrophages during cholesterol influx. Conversely, mRNA and protein expression are suppressed by lipid efflux. Induction is mediated by the liver X receptor/retinoid X receptor (LXR/RXR) pathway. Not induced by bacterial lipopolysaccharides (LPS). Repressed by ZNF202.</text>
</comment>
<comment type="PTM">
    <text evidence="12">Palmitoylation at Cys-315 seems important for trafficking from the endoplasmic reticulum.</text>
</comment>
<comment type="similarity">
    <text evidence="19">Belongs to the ABC transporter superfamily. ABCG family. Eye pigment precursor importer (TC 3.A.1.204) subfamily.</text>
</comment>
<comment type="sequence caution" evidence="19">
    <conflict type="erroneous initiation">
        <sequence resource="EMBL-CDS" id="AAC51098"/>
    </conflict>
    <text>Truncated N-terminus.</text>
</comment>
<comment type="sequence caution" evidence="19">
    <conflict type="erroneous initiation">
        <sequence resource="EMBL-CDS" id="AAK28841"/>
    </conflict>
    <text>Truncated N-terminus.</text>
</comment>
<comment type="sequence caution" evidence="19">
    <conflict type="erroneous initiation">
        <sequence resource="EMBL-CDS" id="BAA95530"/>
    </conflict>
    <text>Truncated N-terminus.</text>
</comment>
<comment type="sequence caution" evidence="19">
    <conflict type="erroneous initiation">
        <sequence resource="EMBL-CDS" id="BAB13728"/>
    </conflict>
    <text>Truncated N-terminus.</text>
</comment>
<comment type="sequence caution" evidence="19">
    <conflict type="erroneous initiation">
        <sequence resource="EMBL-CDS" id="CAA62631"/>
    </conflict>
    <text>Truncated N-terminus.</text>
</comment>
<comment type="sequence caution" evidence="19">
    <conflict type="erroneous initiation">
        <sequence resource="EMBL-CDS" id="CAC00730"/>
    </conflict>
    <text>Truncated N-terminus.</text>
</comment>
<comment type="online information" name="ABCMdb">
    <link uri="http://abcm2.hegelab.org/search"/>
    <text>Database for mutations in ABC proteins</text>
</comment>
<reference key="1">
    <citation type="journal article" date="1996" name="Am. J. Hum. Genet.">
        <title>Cloning of the cDNA for a human homologue of the Drosophila white gene and mapping to chromosome 21q22.3.</title>
        <authorList>
            <person name="Chen H.M."/>
            <person name="Rossier C."/>
            <person name="Lalioti M.D."/>
            <person name="Lynn A."/>
            <person name="Chakravarti A."/>
            <person name="Perrin G."/>
            <person name="Antonarakis S.E."/>
        </authorList>
    </citation>
    <scope>NUCLEOTIDE SEQUENCE [MRNA] OF 3-678 (ISOFORMS 1 AND 4)</scope>
    <source>
        <tissue>Retina</tissue>
    </source>
</reference>
<reference key="2">
    <citation type="journal article" date="2000" name="Genomics">
        <title>Refined localization of autosomal recessive nonsyndromic deafness DFNB10 locus using 34 novel microsatellite markers, genomic structure, and exclusion of six known genes in the region.</title>
        <authorList>
            <person name="Berry A."/>
            <person name="Scott H.S."/>
            <person name="Kudoh J."/>
            <person name="Talior I."/>
            <person name="Korostishevsky M."/>
            <person name="Wattenhofer M."/>
            <person name="Guipponi M."/>
            <person name="Barras C."/>
            <person name="Rossier C."/>
            <person name="Shibuya K."/>
            <person name="Wang J."/>
            <person name="Kawasaki K."/>
            <person name="Asakawa S."/>
            <person name="Minoshima S."/>
            <person name="Shimizu N."/>
            <person name="Antonarakis S.E."/>
            <person name="Bonne-Tamir B."/>
        </authorList>
    </citation>
    <scope>NUCLEOTIDE SEQUENCE [GENOMIC DNA] (ISOFORM 1)</scope>
</reference>
<reference key="3">
    <citation type="journal article" date="2001" name="J. Biol. Chem.">
        <title>The zinc finger protein 202 (ZNF202) is a transcriptional repressor of ATP binding cassette transporter A1 (ABCA1) and ABCG1 gene expression and a modulator of cellular lipid efflux.</title>
        <authorList>
            <person name="Porsch-Oezcueruemez M."/>
            <person name="Langmann T."/>
            <person name="Heimerl S."/>
            <person name="Borsukova H."/>
            <person name="Kaminski W.E."/>
            <person name="Drobnik W."/>
            <person name="Honer C."/>
            <person name="Schumacher C."/>
            <person name="Schmitz G."/>
        </authorList>
    </citation>
    <scope>NUCLEOTIDE SEQUENCE [GENOMIC DNA] (ISOFORM 1)</scope>
    <scope>REPRESSION BY ZNF202</scope>
</reference>
<reference key="4">
    <citation type="journal article" date="2001" name="Biochem. Biophys. Res. Commun.">
        <title>Genomic sequence and structure of the human ABCG1 (ABC8) gene.</title>
        <authorList>
            <person name="Lorkowski S."/>
            <person name="Rust S."/>
            <person name="Engel T."/>
            <person name="Jung E."/>
            <person name="Tegelkamp K."/>
            <person name="Galinski E.A."/>
            <person name="Assmann G."/>
            <person name="Cullen P."/>
        </authorList>
    </citation>
    <scope>NUCLEOTIDE SEQUENCE [GENOMIC DNA / MRNA] (ISOFORMS 2; 3; 4; 5; 6 AND 7)</scope>
</reference>
<reference key="5">
    <citation type="journal article" date="2001" name="J. Biol. Chem.">
        <title>Characterization of the human ABCG1 gene: liver X receptor activates an internal promoter that produces a novel transcript encoding an alternative form of the protein.</title>
        <authorList>
            <person name="Kennedy M.A."/>
            <person name="Venkateswaran A."/>
            <person name="Tarr P.T."/>
            <person name="Xenarios I."/>
            <person name="Kudoh J."/>
            <person name="Shimizu N."/>
            <person name="Edwards P.A."/>
        </authorList>
    </citation>
    <scope>NUCLEOTIDE SEQUENCE [MRNA] (ISOFORM 8)</scope>
    <scope>VARIANT LEU-668</scope>
</reference>
<reference key="6">
    <citation type="journal article" date="2000" name="Nature">
        <title>The DNA sequence of human chromosome 21.</title>
        <authorList>
            <person name="Hattori M."/>
            <person name="Fujiyama A."/>
            <person name="Taylor T.D."/>
            <person name="Watanabe H."/>
            <person name="Yada T."/>
            <person name="Park H.-S."/>
            <person name="Toyoda A."/>
            <person name="Ishii K."/>
            <person name="Totoki Y."/>
            <person name="Choi D.-K."/>
            <person name="Groner Y."/>
            <person name="Soeda E."/>
            <person name="Ohki M."/>
            <person name="Takagi T."/>
            <person name="Sakaki Y."/>
            <person name="Taudien S."/>
            <person name="Blechschmidt K."/>
            <person name="Polley A."/>
            <person name="Menzel U."/>
            <person name="Delabar J."/>
            <person name="Kumpf K."/>
            <person name="Lehmann R."/>
            <person name="Patterson D."/>
            <person name="Reichwald K."/>
            <person name="Rump A."/>
            <person name="Schillhabel M."/>
            <person name="Schudy A."/>
            <person name="Zimmermann W."/>
            <person name="Rosenthal A."/>
            <person name="Kudoh J."/>
            <person name="Shibuya K."/>
            <person name="Kawasaki K."/>
            <person name="Asakawa S."/>
            <person name="Shintani A."/>
            <person name="Sasaki T."/>
            <person name="Nagamine K."/>
            <person name="Mitsuyama S."/>
            <person name="Antonarakis S.E."/>
            <person name="Minoshima S."/>
            <person name="Shimizu N."/>
            <person name="Nordsiek G."/>
            <person name="Hornischer K."/>
            <person name="Brandt P."/>
            <person name="Scharfe M."/>
            <person name="Schoen O."/>
            <person name="Desario A."/>
            <person name="Reichelt J."/>
            <person name="Kauer G."/>
            <person name="Bloecker H."/>
            <person name="Ramser J."/>
            <person name="Beck A."/>
            <person name="Klages S."/>
            <person name="Hennig S."/>
            <person name="Riesselmann L."/>
            <person name="Dagand E."/>
            <person name="Wehrmeyer S."/>
            <person name="Borzym K."/>
            <person name="Gardiner K."/>
            <person name="Nizetic D."/>
            <person name="Francis F."/>
            <person name="Lehrach H."/>
            <person name="Reinhardt R."/>
            <person name="Yaspo M.-L."/>
        </authorList>
    </citation>
    <scope>NUCLEOTIDE SEQUENCE [LARGE SCALE GENOMIC DNA] (ISOFORM 1)</scope>
</reference>
<reference key="7">
    <citation type="journal article" date="2004" name="Genome Res.">
        <title>The status, quality, and expansion of the NIH full-length cDNA project: the Mammalian Gene Collection (MGC).</title>
        <authorList>
            <consortium name="The MGC Project Team"/>
        </authorList>
    </citation>
    <scope>NUCLEOTIDE SEQUENCE [LARGE SCALE MRNA] (ISOFORM 4)</scope>
    <source>
        <tissue>Brain</tissue>
    </source>
</reference>
<reference key="8">
    <citation type="journal article" date="1997" name="Gene">
        <title>Isolation and characterization of a mammalian homolog of the Drosophila white gene.</title>
        <authorList>
            <person name="Croop J.M."/>
            <person name="Tiller G.E."/>
            <person name="Fletcher J.A."/>
            <person name="Lux M.L."/>
            <person name="Raab E."/>
            <person name="Goldenson D."/>
            <person name="Son D."/>
            <person name="Arciniegas S."/>
            <person name="Wu R."/>
        </authorList>
    </citation>
    <scope>NUCLEOTIDE SEQUENCE [MRNA] OF 33-678</scope>
    <source>
        <tissue>Fetal brain</tissue>
    </source>
</reference>
<reference key="9">
    <citation type="journal article" date="2000" name="J. Biol. Chem.">
        <title>Human white/murine ABC8 mRNA levels are highly induced in lipid-loaded macrophages. A transcriptional role for specific oxysterols.</title>
        <authorList>
            <person name="Venkateswaran A."/>
            <person name="Repa J.J."/>
            <person name="Lobaccaro J.-M.A."/>
            <person name="Bronson A."/>
            <person name="Mangelsdorf D.J."/>
            <person name="Edwards P.A."/>
        </authorList>
    </citation>
    <scope>INDUCTION</scope>
    <scope>PROBABLE FUNCTION</scope>
</reference>
<reference key="10">
    <citation type="journal article" date="2000" name="Proc. Natl. Acad. Sci. U.S.A.">
        <title>ABCG1 (ABC8), the human homolog of the Drosophila white gene, is a regulator of macrophage cholesterol and phospholipid transport.</title>
        <authorList>
            <person name="Klucken J."/>
            <person name="Buechler C."/>
            <person name="Orso E."/>
            <person name="Kaminski W.E."/>
            <person name="Porsch-Oezcueruemez M."/>
            <person name="Liebisch G."/>
            <person name="Kapinsky M."/>
            <person name="Diederich W."/>
            <person name="Drobnik W."/>
            <person name="Dean M."/>
            <person name="Allikmets R."/>
            <person name="Schmitz G."/>
        </authorList>
    </citation>
    <scope>INDUCTION</scope>
    <scope>PROBABLE FUNCTION</scope>
</reference>
<reference key="11">
    <citation type="journal article" date="2002" name="J. Lipid Res.">
        <title>Bacterial lipopolysaccharide induces expression of ABCA1 but not ABCG1 via an LXR-independent pathway.</title>
        <authorList>
            <person name="Kaplan R."/>
            <person name="Gan X."/>
            <person name="Menke J.G."/>
            <person name="Wright S.D."/>
            <person name="Cai T.-Q."/>
        </authorList>
    </citation>
    <scope>INDUCTION</scope>
</reference>
<reference key="12">
    <citation type="journal article" date="2001" name="J. Lipid Res.">
        <title>Role of ABCG1 and other ABCG family members in lipid metabolism.</title>
        <authorList>
            <person name="Schmitz G."/>
            <person name="Langmann T."/>
            <person name="Heimerl S."/>
        </authorList>
    </citation>
    <scope>REVIEW</scope>
</reference>
<reference key="13">
    <citation type="journal article" date="2001" name="Biochem. Biophys. Res. Commun.">
        <title>Expression of the ATP-binding cassette transporter gene ABCG1 (ABC8) in Tangier disease.</title>
        <authorList>
            <person name="Lorkowski S."/>
            <person name="Kratz M."/>
            <person name="Wenner C."/>
            <person name="Schmidt R."/>
            <person name="Weitkamp B."/>
            <person name="Fobker M."/>
            <person name="Reinhardt J."/>
            <person name="Rauterberg J."/>
            <person name="Galinski E.A."/>
            <person name="Cullen P."/>
        </authorList>
    </citation>
    <scope>TISSUE SPECIFICITY</scope>
</reference>
<reference key="14">
    <citation type="journal article" date="2006" name="J. Lipid Res.">
        <title>Efflux of sphingomyelin, cholesterol, and phosphatidylcholine by ABCG1.</title>
        <authorList>
            <person name="Kobayashi A."/>
            <person name="Takanezawa Y."/>
            <person name="Hirata T."/>
            <person name="Shimizu Y."/>
            <person name="Misasa K."/>
            <person name="Kioka N."/>
            <person name="Arai H."/>
            <person name="Ueda K."/>
            <person name="Matsuo M."/>
        </authorList>
    </citation>
    <scope>CATALYTIC ACTIVITY</scope>
    <scope>SUBCELLULAR LOCATION</scope>
    <scope>INDUCTION</scope>
    <scope>SUBUNIT</scope>
    <scope>MUTAGENESIS OF LYS-124</scope>
    <scope>ACTIVITY REGULATION</scope>
</reference>
<reference key="15">
    <citation type="journal article" date="2007" name="FEBS Lett.">
        <title>Expression of ATP binding cassette-transporter ABCG1 prevents cell death by transporting cytotoxic 7beta-hydroxycholesterol.</title>
        <authorList>
            <person name="Engel T."/>
            <person name="Kannenberg F."/>
            <person name="Fobker M."/>
            <person name="Nofer J.R."/>
            <person name="Bode G."/>
            <person name="Lueken A."/>
            <person name="Assmann G."/>
            <person name="Seedorf U."/>
        </authorList>
    </citation>
    <scope>CATALYTIC ACTIVITY</scope>
    <scope>FUNCTION</scope>
    <scope>MUTAGENESIS OF LYS-124</scope>
    <scope>INDUCTION</scope>
</reference>
<reference key="16">
    <citation type="journal article" date="2012" name="Mol. Cell. Proteomics">
        <title>Antibody-based protein profiling of the human chromosome 21.</title>
        <authorList>
            <person name="Uhlen M."/>
            <person name="Oksvold P."/>
            <person name="Algenas C."/>
            <person name="Hamsten C."/>
            <person name="Fagerberg L."/>
            <person name="Klevebring D."/>
            <person name="Lundberg E."/>
            <person name="Odeberg J."/>
            <person name="Ponten F."/>
            <person name="Kondo T."/>
            <person name="Sivertsson A."/>
        </authorList>
    </citation>
    <scope>SUBCELLULAR LOCATION</scope>
</reference>
<reference key="17">
    <citation type="journal article" date="2013" name="Biochim. Biophys. Acta">
        <title>Characterization of palmitoylation of ATP binding cassette transporter G1: Effect on protein trafficking and function.</title>
        <authorList>
            <person name="Gu H.M."/>
            <person name="Li G."/>
            <person name="Gao X."/>
            <person name="Berthiaume L.G."/>
            <person name="Zhang D.W."/>
        </authorList>
    </citation>
    <scope>PALMITOYLATION AT CYS-30; CYS-154; CYS-315; CYS-394 AND CYS-406</scope>
    <scope>MUTAGENESIS OF CYS-30; CYS-154; CYS-315; CYS-394 AND CYS-406</scope>
</reference>
<reference key="18">
    <citation type="journal article" date="2014" name="Biochim. Biophys. Acta">
        <title>Caveolin-1 interacts with ATP binding cassette transporter G1 (ABCG1) and regulates ABCG1-mediated cholesterol efflux.</title>
        <authorList>
            <person name="Gu H.M."/>
            <person name="Wang F.Q."/>
            <person name="Zhang D.W."/>
        </authorList>
    </citation>
    <scope>CATALYTIC ACTIVITY</scope>
    <scope>INTERACTION WITH CAV1</scope>
    <scope>FUNCTION</scope>
    <scope>MUTAGENESIS OF TYR-491; TYR-493; TYR-498 AND TYR-499</scope>
    <scope>SUBCELLULAR LOCATION</scope>
</reference>
<reference key="19">
    <citation type="journal article" date="2016" name="PLoS ONE">
        <title>Functional Cooperativity between ABCG4 and ABCG1 Isoforms.</title>
        <authorList>
            <person name="Hegyi Z."/>
            <person name="Homolya L."/>
        </authorList>
    </citation>
    <scope>SUBUNIT</scope>
    <scope>INTERACTION WITH ABCG4</scope>
    <scope>MUTAGENESIS OF LYS-124</scope>
</reference>
<proteinExistence type="evidence at protein level"/>
<name>ABCG1_HUMAN</name>
<gene>
    <name evidence="20" type="primary">ABCG1</name>
    <name type="synonym">ABC8</name>
    <name type="synonym">WHT1</name>
</gene>
<accession>P45844</accession>
<accession>Q86SU8</accession>
<accession>Q96L76</accession>
<accession>Q9BXK6</accession>
<accession>Q9BXK7</accession>
<accession>Q9BXK8</accession>
<accession>Q9BXK9</accession>
<accession>Q9BXL0</accession>
<accession>Q9BXL1</accession>
<accession>Q9BXL2</accession>
<accession>Q9BXL3</accession>
<accession>Q9BXL4</accession>